<evidence type="ECO:0000255" key="1">
    <source>
        <dbReference type="HAMAP-Rule" id="MF_00057"/>
    </source>
</evidence>
<proteinExistence type="inferred from homology"/>
<reference key="1">
    <citation type="submission" date="2009-01" db="EMBL/GenBank/DDBJ databases">
        <title>Complete sequence of Diaphorobacter sp. TPSY.</title>
        <authorList>
            <consortium name="US DOE Joint Genome Institute"/>
            <person name="Lucas S."/>
            <person name="Copeland A."/>
            <person name="Lapidus A."/>
            <person name="Glavina del Rio T."/>
            <person name="Tice H."/>
            <person name="Bruce D."/>
            <person name="Goodwin L."/>
            <person name="Pitluck S."/>
            <person name="Chertkov O."/>
            <person name="Brettin T."/>
            <person name="Detter J.C."/>
            <person name="Han C."/>
            <person name="Larimer F."/>
            <person name="Land M."/>
            <person name="Hauser L."/>
            <person name="Kyrpides N."/>
            <person name="Mikhailova N."/>
            <person name="Coates J.D."/>
        </authorList>
    </citation>
    <scope>NUCLEOTIDE SEQUENCE [LARGE SCALE GENOMIC DNA]</scope>
    <source>
        <strain>TPSY</strain>
    </source>
</reference>
<accession>B9MI81</accession>
<dbReference type="EC" id="2.7.7.38" evidence="1"/>
<dbReference type="EMBL" id="CP001392">
    <property type="protein sequence ID" value="ACM33013.1"/>
    <property type="molecule type" value="Genomic_DNA"/>
</dbReference>
<dbReference type="RefSeq" id="WP_015913122.1">
    <property type="nucleotide sequence ID" value="NC_011992.1"/>
</dbReference>
<dbReference type="SMR" id="B9MI81"/>
<dbReference type="KEGG" id="dia:Dtpsy_1552"/>
<dbReference type="eggNOG" id="COG1212">
    <property type="taxonomic scope" value="Bacteria"/>
</dbReference>
<dbReference type="HOGENOM" id="CLU_065038_1_0_4"/>
<dbReference type="UniPathway" id="UPA00030"/>
<dbReference type="UniPathway" id="UPA00358">
    <property type="reaction ID" value="UER00476"/>
</dbReference>
<dbReference type="Proteomes" id="UP000000450">
    <property type="component" value="Chromosome"/>
</dbReference>
<dbReference type="GO" id="GO:0005829">
    <property type="term" value="C:cytosol"/>
    <property type="evidence" value="ECO:0007669"/>
    <property type="project" value="TreeGrafter"/>
</dbReference>
<dbReference type="GO" id="GO:0008690">
    <property type="term" value="F:3-deoxy-manno-octulosonate cytidylyltransferase activity"/>
    <property type="evidence" value="ECO:0007669"/>
    <property type="project" value="UniProtKB-UniRule"/>
</dbReference>
<dbReference type="GO" id="GO:0033468">
    <property type="term" value="P:CMP-keto-3-deoxy-D-manno-octulosonic acid biosynthetic process"/>
    <property type="evidence" value="ECO:0007669"/>
    <property type="project" value="UniProtKB-UniRule"/>
</dbReference>
<dbReference type="GO" id="GO:0009103">
    <property type="term" value="P:lipopolysaccharide biosynthetic process"/>
    <property type="evidence" value="ECO:0007669"/>
    <property type="project" value="UniProtKB-UniRule"/>
</dbReference>
<dbReference type="CDD" id="cd02517">
    <property type="entry name" value="CMP-KDO-Synthetase"/>
    <property type="match status" value="1"/>
</dbReference>
<dbReference type="FunFam" id="3.90.550.10:FF:000011">
    <property type="entry name" value="3-deoxy-manno-octulosonate cytidylyltransferase"/>
    <property type="match status" value="1"/>
</dbReference>
<dbReference type="Gene3D" id="3.90.550.10">
    <property type="entry name" value="Spore Coat Polysaccharide Biosynthesis Protein SpsA, Chain A"/>
    <property type="match status" value="1"/>
</dbReference>
<dbReference type="HAMAP" id="MF_00057">
    <property type="entry name" value="KdsB"/>
    <property type="match status" value="1"/>
</dbReference>
<dbReference type="InterPro" id="IPR003329">
    <property type="entry name" value="Cytidylyl_trans"/>
</dbReference>
<dbReference type="InterPro" id="IPR004528">
    <property type="entry name" value="KdsB"/>
</dbReference>
<dbReference type="InterPro" id="IPR029044">
    <property type="entry name" value="Nucleotide-diphossugar_trans"/>
</dbReference>
<dbReference type="NCBIfam" id="TIGR00466">
    <property type="entry name" value="kdsB"/>
    <property type="match status" value="1"/>
</dbReference>
<dbReference type="NCBIfam" id="NF003952">
    <property type="entry name" value="PRK05450.1-5"/>
    <property type="match status" value="1"/>
</dbReference>
<dbReference type="NCBIfam" id="NF009905">
    <property type="entry name" value="PRK13368.1"/>
    <property type="match status" value="1"/>
</dbReference>
<dbReference type="PANTHER" id="PTHR42866">
    <property type="entry name" value="3-DEOXY-MANNO-OCTULOSONATE CYTIDYLYLTRANSFERASE"/>
    <property type="match status" value="1"/>
</dbReference>
<dbReference type="PANTHER" id="PTHR42866:SF2">
    <property type="entry name" value="3-DEOXY-MANNO-OCTULOSONATE CYTIDYLYLTRANSFERASE, MITOCHONDRIAL"/>
    <property type="match status" value="1"/>
</dbReference>
<dbReference type="Pfam" id="PF02348">
    <property type="entry name" value="CTP_transf_3"/>
    <property type="match status" value="1"/>
</dbReference>
<dbReference type="SUPFAM" id="SSF53448">
    <property type="entry name" value="Nucleotide-diphospho-sugar transferases"/>
    <property type="match status" value="1"/>
</dbReference>
<organism>
    <name type="scientific">Acidovorax ebreus (strain TPSY)</name>
    <name type="common">Diaphorobacter sp. (strain TPSY)</name>
    <dbReference type="NCBI Taxonomy" id="535289"/>
    <lineage>
        <taxon>Bacteria</taxon>
        <taxon>Pseudomonadati</taxon>
        <taxon>Pseudomonadota</taxon>
        <taxon>Betaproteobacteria</taxon>
        <taxon>Burkholderiales</taxon>
        <taxon>Comamonadaceae</taxon>
        <taxon>Diaphorobacter</taxon>
    </lineage>
</organism>
<protein>
    <recommendedName>
        <fullName evidence="1">3-deoxy-manno-octulosonate cytidylyltransferase</fullName>
        <ecNumber evidence="1">2.7.7.38</ecNumber>
    </recommendedName>
    <alternativeName>
        <fullName evidence="1">CMP-2-keto-3-deoxyoctulosonic acid synthase</fullName>
        <shortName evidence="1">CKS</shortName>
        <shortName evidence="1">CMP-KDO synthase</shortName>
    </alternativeName>
</protein>
<name>KDSB_ACIET</name>
<feature type="chain" id="PRO_1000117798" description="3-deoxy-manno-octulosonate cytidylyltransferase">
    <location>
        <begin position="1"/>
        <end position="262"/>
    </location>
</feature>
<keyword id="KW-0963">Cytoplasm</keyword>
<keyword id="KW-0448">Lipopolysaccharide biosynthesis</keyword>
<keyword id="KW-0548">Nucleotidyltransferase</keyword>
<keyword id="KW-1185">Reference proteome</keyword>
<keyword id="KW-0808">Transferase</keyword>
<comment type="function">
    <text evidence="1">Activates KDO (a required 8-carbon sugar) for incorporation into bacterial lipopolysaccharide in Gram-negative bacteria.</text>
</comment>
<comment type="catalytic activity">
    <reaction evidence="1">
        <text>3-deoxy-alpha-D-manno-oct-2-ulosonate + CTP = CMP-3-deoxy-beta-D-manno-octulosonate + diphosphate</text>
        <dbReference type="Rhea" id="RHEA:23448"/>
        <dbReference type="ChEBI" id="CHEBI:33019"/>
        <dbReference type="ChEBI" id="CHEBI:37563"/>
        <dbReference type="ChEBI" id="CHEBI:85986"/>
        <dbReference type="ChEBI" id="CHEBI:85987"/>
        <dbReference type="EC" id="2.7.7.38"/>
    </reaction>
</comment>
<comment type="pathway">
    <text evidence="1">Nucleotide-sugar biosynthesis; CMP-3-deoxy-D-manno-octulosonate biosynthesis; CMP-3-deoxy-D-manno-octulosonate from 3-deoxy-D-manno-octulosonate and CTP: step 1/1.</text>
</comment>
<comment type="pathway">
    <text evidence="1">Bacterial outer membrane biogenesis; lipopolysaccharide biosynthesis.</text>
</comment>
<comment type="subcellular location">
    <subcellularLocation>
        <location evidence="1">Cytoplasm</location>
    </subcellularLocation>
</comment>
<comment type="similarity">
    <text evidence="1">Belongs to the KdsB family.</text>
</comment>
<sequence length="262" mass="27666">MSRAAPFTVLIPARLASTRLPNKPLADIAGLPMVVHVARRASQSGAQRCVVAADDARIVQACQAHGVQALLTRADHASGSDRLAEACELLGLAGEDIVVNVQGDEPLIDPRLIDAVAALLHARGDASMGTAAHAIDSAEDFANPNVVKVVLDAQGLAHYFSRAPIPHARDHGPGSLWWQPGQTGVPVGFAPLRHIGIYSYRAGFLRRFPQLPAAPTEQLEALEQLRALWHGHRIAVHVTGSAPGAGVDTPADLERVRTLLGG</sequence>
<gene>
    <name evidence="1" type="primary">kdsB</name>
    <name type="ordered locus">Dtpsy_1552</name>
</gene>